<name>THIM_STAAW</name>
<comment type="function">
    <text evidence="1">Catalyzes the phosphorylation of the hydroxyl group of 4-methyl-5-beta-hydroxyethylthiazole (THZ).</text>
</comment>
<comment type="catalytic activity">
    <reaction evidence="1">
        <text>5-(2-hydroxyethyl)-4-methylthiazole + ATP = 4-methyl-5-(2-phosphooxyethyl)-thiazole + ADP + H(+)</text>
        <dbReference type="Rhea" id="RHEA:24212"/>
        <dbReference type="ChEBI" id="CHEBI:15378"/>
        <dbReference type="ChEBI" id="CHEBI:17957"/>
        <dbReference type="ChEBI" id="CHEBI:30616"/>
        <dbReference type="ChEBI" id="CHEBI:58296"/>
        <dbReference type="ChEBI" id="CHEBI:456216"/>
        <dbReference type="EC" id="2.7.1.50"/>
    </reaction>
</comment>
<comment type="cofactor">
    <cofactor evidence="1">
        <name>Mg(2+)</name>
        <dbReference type="ChEBI" id="CHEBI:18420"/>
    </cofactor>
</comment>
<comment type="pathway">
    <text evidence="1">Cofactor biosynthesis; thiamine diphosphate biosynthesis; 4-methyl-5-(2-phosphoethyl)-thiazole from 5-(2-hydroxyethyl)-4-methylthiazole: step 1/1.</text>
</comment>
<comment type="similarity">
    <text evidence="1">Belongs to the Thz kinase family.</text>
</comment>
<gene>
    <name evidence="1" type="primary">thiM</name>
    <name type="ordered locus">MW2015</name>
</gene>
<sequence length="266" mass="28463">MNYLNKIRIENPLTICYTNDVVKNFTANGLLSIGASPAMSEAPEEAEEFYKVAQGLLINIGTLTAENEQDIIAIAQTANEAGLPIVFDPVAVGASTYRKQFCKLLLKSAKVSVIKGNASEILALIDDTATMKGTDSDANLDAVTIAKKAYATYKTAIVITGKEDVIVQDNKAIVLANGSPLLARVTGAGCLLGGVIAGFLFRETEPDIEALIEAVSVFNIAAEVAAENENCGGPGTFSPLLLDTLYHLNETTYQQRIRIQEVEKYV</sequence>
<proteinExistence type="inferred from homology"/>
<protein>
    <recommendedName>
        <fullName evidence="1">Hydroxyethylthiazole kinase</fullName>
        <ecNumber evidence="1">2.7.1.50</ecNumber>
    </recommendedName>
    <alternativeName>
        <fullName evidence="1">4-methyl-5-beta-hydroxyethylthiazole kinase</fullName>
        <shortName evidence="1">TH kinase</shortName>
        <shortName evidence="1">Thz kinase</shortName>
    </alternativeName>
</protein>
<keyword id="KW-0067">ATP-binding</keyword>
<keyword id="KW-0418">Kinase</keyword>
<keyword id="KW-0460">Magnesium</keyword>
<keyword id="KW-0479">Metal-binding</keyword>
<keyword id="KW-0547">Nucleotide-binding</keyword>
<keyword id="KW-0784">Thiamine biosynthesis</keyword>
<keyword id="KW-0808">Transferase</keyword>
<feature type="chain" id="PRO_0000156957" description="Hydroxyethylthiazole kinase">
    <location>
        <begin position="1"/>
        <end position="266"/>
    </location>
</feature>
<feature type="binding site" evidence="1">
    <location>
        <position position="39"/>
    </location>
    <ligand>
        <name>substrate</name>
    </ligand>
</feature>
<feature type="binding site" evidence="1">
    <location>
        <position position="115"/>
    </location>
    <ligand>
        <name>ATP</name>
        <dbReference type="ChEBI" id="CHEBI:30616"/>
    </ligand>
</feature>
<feature type="binding site" evidence="1">
    <location>
        <position position="160"/>
    </location>
    <ligand>
        <name>ATP</name>
        <dbReference type="ChEBI" id="CHEBI:30616"/>
    </ligand>
</feature>
<feature type="binding site" evidence="1">
    <location>
        <position position="187"/>
    </location>
    <ligand>
        <name>substrate</name>
    </ligand>
</feature>
<reference key="1">
    <citation type="journal article" date="2002" name="Lancet">
        <title>Genome and virulence determinants of high virulence community-acquired MRSA.</title>
        <authorList>
            <person name="Baba T."/>
            <person name="Takeuchi F."/>
            <person name="Kuroda M."/>
            <person name="Yuzawa H."/>
            <person name="Aoki K."/>
            <person name="Oguchi A."/>
            <person name="Nagai Y."/>
            <person name="Iwama N."/>
            <person name="Asano K."/>
            <person name="Naimi T."/>
            <person name="Kuroda H."/>
            <person name="Cui L."/>
            <person name="Yamamoto K."/>
            <person name="Hiramatsu K."/>
        </authorList>
    </citation>
    <scope>NUCLEOTIDE SEQUENCE [LARGE SCALE GENOMIC DNA]</scope>
    <source>
        <strain>MW2</strain>
    </source>
</reference>
<evidence type="ECO:0000255" key="1">
    <source>
        <dbReference type="HAMAP-Rule" id="MF_00228"/>
    </source>
</evidence>
<organism>
    <name type="scientific">Staphylococcus aureus (strain MW2)</name>
    <dbReference type="NCBI Taxonomy" id="196620"/>
    <lineage>
        <taxon>Bacteria</taxon>
        <taxon>Bacillati</taxon>
        <taxon>Bacillota</taxon>
        <taxon>Bacilli</taxon>
        <taxon>Bacillales</taxon>
        <taxon>Staphylococcaceae</taxon>
        <taxon>Staphylococcus</taxon>
    </lineage>
</organism>
<dbReference type="EC" id="2.7.1.50" evidence="1"/>
<dbReference type="EMBL" id="BA000033">
    <property type="protein sequence ID" value="BAB95880.1"/>
    <property type="molecule type" value="Genomic_DNA"/>
</dbReference>
<dbReference type="RefSeq" id="WP_001108492.1">
    <property type="nucleotide sequence ID" value="NC_003923.1"/>
</dbReference>
<dbReference type="SMR" id="Q8NVH4"/>
<dbReference type="KEGG" id="sam:MW2015"/>
<dbReference type="HOGENOM" id="CLU_019943_0_2_9"/>
<dbReference type="UniPathway" id="UPA00060">
    <property type="reaction ID" value="UER00139"/>
</dbReference>
<dbReference type="GO" id="GO:0005524">
    <property type="term" value="F:ATP binding"/>
    <property type="evidence" value="ECO:0007669"/>
    <property type="project" value="UniProtKB-UniRule"/>
</dbReference>
<dbReference type="GO" id="GO:0004417">
    <property type="term" value="F:hydroxyethylthiazole kinase activity"/>
    <property type="evidence" value="ECO:0007669"/>
    <property type="project" value="UniProtKB-UniRule"/>
</dbReference>
<dbReference type="GO" id="GO:0000287">
    <property type="term" value="F:magnesium ion binding"/>
    <property type="evidence" value="ECO:0007669"/>
    <property type="project" value="UniProtKB-UniRule"/>
</dbReference>
<dbReference type="GO" id="GO:0009228">
    <property type="term" value="P:thiamine biosynthetic process"/>
    <property type="evidence" value="ECO:0007669"/>
    <property type="project" value="UniProtKB-KW"/>
</dbReference>
<dbReference type="GO" id="GO:0009229">
    <property type="term" value="P:thiamine diphosphate biosynthetic process"/>
    <property type="evidence" value="ECO:0007669"/>
    <property type="project" value="UniProtKB-UniRule"/>
</dbReference>
<dbReference type="CDD" id="cd01170">
    <property type="entry name" value="THZ_kinase"/>
    <property type="match status" value="1"/>
</dbReference>
<dbReference type="Gene3D" id="3.40.1190.20">
    <property type="match status" value="1"/>
</dbReference>
<dbReference type="HAMAP" id="MF_00228">
    <property type="entry name" value="Thz_kinase"/>
    <property type="match status" value="1"/>
</dbReference>
<dbReference type="InterPro" id="IPR000417">
    <property type="entry name" value="Hyethyz_kinase"/>
</dbReference>
<dbReference type="InterPro" id="IPR029056">
    <property type="entry name" value="Ribokinase-like"/>
</dbReference>
<dbReference type="NCBIfam" id="NF006830">
    <property type="entry name" value="PRK09355.1"/>
    <property type="match status" value="1"/>
</dbReference>
<dbReference type="Pfam" id="PF02110">
    <property type="entry name" value="HK"/>
    <property type="match status" value="1"/>
</dbReference>
<dbReference type="PIRSF" id="PIRSF000513">
    <property type="entry name" value="Thz_kinase"/>
    <property type="match status" value="1"/>
</dbReference>
<dbReference type="PRINTS" id="PR01099">
    <property type="entry name" value="HYETHTZKNASE"/>
</dbReference>
<dbReference type="SUPFAM" id="SSF53613">
    <property type="entry name" value="Ribokinase-like"/>
    <property type="match status" value="1"/>
</dbReference>
<accession>Q8NVH4</accession>